<proteinExistence type="evidence at protein level"/>
<dbReference type="EC" id="3.4.21.-"/>
<dbReference type="EMBL" id="AJ223631">
    <property type="protein sequence ID" value="CAA11507.1"/>
    <property type="molecule type" value="Genomic_DNA"/>
</dbReference>
<dbReference type="RefSeq" id="WP_021534952.1">
    <property type="nucleotide sequence ID" value="NZ_UGFJ01000001.1"/>
</dbReference>
<dbReference type="PDB" id="1WXR">
    <property type="method" value="X-ray"/>
    <property type="resolution" value="2.20 A"/>
    <property type="chains" value="A=53-1100"/>
</dbReference>
<dbReference type="PDB" id="3AEH">
    <property type="method" value="X-ray"/>
    <property type="resolution" value="2.00 A"/>
    <property type="chains" value="A/B=1075-1377"/>
</dbReference>
<dbReference type="PDB" id="3AK5">
    <property type="method" value="X-ray"/>
    <property type="resolution" value="2.20 A"/>
    <property type="chains" value="A/B/C/D=53-533, A/B/C/D=608-1100"/>
</dbReference>
<dbReference type="PDBsum" id="1WXR"/>
<dbReference type="PDBsum" id="3AEH"/>
<dbReference type="PDBsum" id="3AK5"/>
<dbReference type="SMR" id="O88093"/>
<dbReference type="MEROPS" id="S06.003"/>
<dbReference type="EvolutionaryTrace" id="O88093"/>
<dbReference type="GO" id="GO:0009279">
    <property type="term" value="C:cell outer membrane"/>
    <property type="evidence" value="ECO:0007669"/>
    <property type="project" value="UniProtKB-SubCell"/>
</dbReference>
<dbReference type="GO" id="GO:0009986">
    <property type="term" value="C:cell surface"/>
    <property type="evidence" value="ECO:0007669"/>
    <property type="project" value="UniProtKB-SubCell"/>
</dbReference>
<dbReference type="GO" id="GO:0005576">
    <property type="term" value="C:extracellular region"/>
    <property type="evidence" value="ECO:0007669"/>
    <property type="project" value="UniProtKB-SubCell"/>
</dbReference>
<dbReference type="GO" id="GO:0042597">
    <property type="term" value="C:periplasmic space"/>
    <property type="evidence" value="ECO:0007669"/>
    <property type="project" value="UniProtKB-SubCell"/>
</dbReference>
<dbReference type="GO" id="GO:0004252">
    <property type="term" value="F:serine-type endopeptidase activity"/>
    <property type="evidence" value="ECO:0007669"/>
    <property type="project" value="InterPro"/>
</dbReference>
<dbReference type="GO" id="GO:0006508">
    <property type="term" value="P:proteolysis"/>
    <property type="evidence" value="ECO:0007669"/>
    <property type="project" value="UniProtKB-KW"/>
</dbReference>
<dbReference type="CDD" id="cd01343">
    <property type="entry name" value="PL1_Passenger_AT"/>
    <property type="match status" value="1"/>
</dbReference>
<dbReference type="Gene3D" id="2.160.20.20">
    <property type="match status" value="1"/>
</dbReference>
<dbReference type="Gene3D" id="2.40.10.120">
    <property type="match status" value="1"/>
</dbReference>
<dbReference type="Gene3D" id="3.30.160.280">
    <property type="match status" value="1"/>
</dbReference>
<dbReference type="Gene3D" id="2.40.128.130">
    <property type="entry name" value="Autotransporter beta-domain"/>
    <property type="match status" value="1"/>
</dbReference>
<dbReference type="InterPro" id="IPR005546">
    <property type="entry name" value="Autotransporte_beta"/>
</dbReference>
<dbReference type="InterPro" id="IPR036709">
    <property type="entry name" value="Autotransporte_beta_dom_sf"/>
</dbReference>
<dbReference type="InterPro" id="IPR012332">
    <property type="entry name" value="Autotransporter_pectin_lyase_C"/>
</dbReference>
<dbReference type="InterPro" id="IPR050909">
    <property type="entry name" value="Bact_Autotransporter_VF"/>
</dbReference>
<dbReference type="InterPro" id="IPR006315">
    <property type="entry name" value="OM_autotransptr_brl_dom"/>
</dbReference>
<dbReference type="InterPro" id="IPR011050">
    <property type="entry name" value="Pectin_lyase_fold/virulence"/>
</dbReference>
<dbReference type="InterPro" id="IPR009003">
    <property type="entry name" value="Peptidase_S1_PA"/>
</dbReference>
<dbReference type="InterPro" id="IPR000710">
    <property type="entry name" value="Peptidase_S6"/>
</dbReference>
<dbReference type="InterPro" id="IPR030396">
    <property type="entry name" value="Peptidase_S6_dom"/>
</dbReference>
<dbReference type="NCBIfam" id="TIGR01414">
    <property type="entry name" value="autotrans_barl"/>
    <property type="match status" value="1"/>
</dbReference>
<dbReference type="PANTHER" id="PTHR12338">
    <property type="entry name" value="AUTOTRANSPORTER"/>
    <property type="match status" value="1"/>
</dbReference>
<dbReference type="PANTHER" id="PTHR12338:SF8">
    <property type="entry name" value="HEME_HEMOPEXIN-BINDING PROTEIN"/>
    <property type="match status" value="1"/>
</dbReference>
<dbReference type="Pfam" id="PF03797">
    <property type="entry name" value="Autotransporter"/>
    <property type="match status" value="1"/>
</dbReference>
<dbReference type="Pfam" id="PF24078">
    <property type="entry name" value="Beta-sol_PIC_HAP1_IgA0_2nd"/>
    <property type="match status" value="1"/>
</dbReference>
<dbReference type="Pfam" id="PF02395">
    <property type="entry name" value="Peptidase_S6"/>
    <property type="match status" value="1"/>
</dbReference>
<dbReference type="PRINTS" id="PR00921">
    <property type="entry name" value="IGASERPTASE"/>
</dbReference>
<dbReference type="SMART" id="SM00869">
    <property type="entry name" value="Autotransporter"/>
    <property type="match status" value="1"/>
</dbReference>
<dbReference type="SUPFAM" id="SSF103515">
    <property type="entry name" value="Autotransporter"/>
    <property type="match status" value="1"/>
</dbReference>
<dbReference type="SUPFAM" id="SSF51126">
    <property type="entry name" value="Pectin lyase-like"/>
    <property type="match status" value="2"/>
</dbReference>
<dbReference type="SUPFAM" id="SSF50494">
    <property type="entry name" value="Trypsin-like serine proteases"/>
    <property type="match status" value="1"/>
</dbReference>
<dbReference type="PROSITE" id="PS51208">
    <property type="entry name" value="AUTOTRANSPORTER"/>
    <property type="match status" value="1"/>
</dbReference>
<dbReference type="PROSITE" id="PS51691">
    <property type="entry name" value="PEPTIDASE_S6"/>
    <property type="match status" value="1"/>
</dbReference>
<evidence type="ECO:0000250" key="1"/>
<evidence type="ECO:0000255" key="2">
    <source>
        <dbReference type="PROSITE-ProRule" id="PRU00556"/>
    </source>
</evidence>
<evidence type="ECO:0000255" key="3">
    <source>
        <dbReference type="PROSITE-ProRule" id="PRU01028"/>
    </source>
</evidence>
<evidence type="ECO:0000269" key="4">
    <source>
    </source>
</evidence>
<evidence type="ECO:0000269" key="5">
    <source>
    </source>
</evidence>
<evidence type="ECO:0007829" key="6">
    <source>
        <dbReference type="PDB" id="1WXR"/>
    </source>
</evidence>
<evidence type="ECO:0007829" key="7">
    <source>
        <dbReference type="PDB" id="3AEH"/>
    </source>
</evidence>
<evidence type="ECO:0007829" key="8">
    <source>
        <dbReference type="PDB" id="3AK5"/>
    </source>
</evidence>
<sequence length="1377" mass="148257">MNRIYSLRYSAVARGFIAVSEFARKCVHKSVRRLCFPVLLLIPVLFSAGSLAGTVNNELGYQLFRDFAENKGMFRPGATNIAIYNKQGEFVGTLDKAAMPDFSAVDSEIGVATLINPQYIASVKHNGGYTNVSFGDGENRYNIVDRNNAPSLDFHAPRLDKLVTEVAPTAVTAQGAVAGAYLDKERYPVFYRLGSGTQYIKDSNGQLTKMGGAYSWLTGGTVGSLSSYQNGEMISTSSGLVFDYKLNGAMPIYGEAGDSGSPLFAFDTVQNKWVLVGVLTAGNGAGGRGNNWAVIPLDFIGQKFNEDNDAPVTFRTSEGGALEWSFNSSTGAGALTQGTTTYAMHGQQGNDLNAGKNLIFQGQNGQINLKDSVSQGAGSLTFRDNYTVTTSNGSTWTGAGIVVDNGVSVNWQVNGVKGDNLHKIGEGTLTVQGTGINEGGLKVGDGKVVLNQQADNKGQVQAFSSVNIASGRPTVVLTDERQVNPDTVSWGYRGGTLDVNGNSLTFHQLKAADYGAVLANNVDKRATITLDYALRADKVALNGWSESGKGTAGNLYKYNNPYTNTTDYFILKQSTYGYFPTDQSSNATWEFVGHSQGDAQKLVADRFNTAGYLFHGQLKGNLNVDNRLPEGVTGALVMDGAADISGTFTQENGRLTLQGHPVIHAYNTQSVADKLAASGDHSVLTQPTSFSQEDWENRSFTFDRLSLKNTDFGLGRNATLNTTIQADNSSVTLGDSRVFIDKNDGQGTAFTLEEGTSVATKDADKSVFNGTVNLDNQSVLNINDIFNGGIQANNSTVNISSDSAVLGNSTLTSTALNLNKGANALASQSFVSDGPVNISDATLSLNSRPDEVSHTLLPVYDYAGSWNLKGDDARLNVGPYSMLSGNINVQDKGTVTLGGEGELSPDLTLQNQMLYSLFNGYRNIWSGSLNAPDATVSMTDTQWSMNGNSTAGNMKLNRTIVGFNGGTSPFTTLTTDNLDAVQSAFVMRTDLNKADKLVINKSATGHDNSIWVNFLKKPSNKDTLDIPLVSAPEATADNLFRASTRVVGFSDVTPILSVRKEDGKKEWVLDGYQVARNDGQGKAAATFMHISYNNFITEVNNLNKRMGDLRDINGEAGTWVRLLNGSGSADGGFTDHYTLLQMGADRKHELGSMDLFTGVMATYTDTDASADLYSGKTKSWGGGFYASGLFRSGAYFDVIAKYIHNENKYDLNFAGAGKQNFRSHSLYAGAEVGYRYHLTDTTFVEPQAELVWGRLQGQTFNWNDSGMDVSMRRNSVNPLVGRTGVVSGKTFSGKDWSLTARAGLHYEFDLTDSADVHLKDAAGEHQINGRKDSRMLYGVGLNARFGDNTRLGLEVERSAFGKYNTDDAINANIRYSF</sequence>
<reference key="1">
    <citation type="journal article" date="1998" name="J. Exp. Med.">
        <title>Characterization of a hemoglobin protease secreted by the pathogenic Escherichia coli strain EB1.</title>
        <authorList>
            <person name="Otto B.R."/>
            <person name="van Dooren S.J.M."/>
            <person name="Nuijens J.H."/>
            <person name="Luirink J."/>
            <person name="Oudega B."/>
        </authorList>
    </citation>
    <scope>NUCLEOTIDE SEQUENCE [GENOMIC DNA]</scope>
    <scope>PROTEIN SEQUENCE OF 53-66</scope>
    <scope>FUNCTION</scope>
    <scope>SUBCELLULAR LOCATION</scope>
    <scope>BIOPHYSICOCHEMICAL PROPERTIES</scope>
    <source>
        <strain>O8:K43 / EB1</strain>
    </source>
</reference>
<reference key="2">
    <citation type="journal article" date="2002" name="Infect. Immun.">
        <title>Escherichia coli hemoglobin protease autotransporter contributes to synergistic abscess formation and heme-dependent growth of Bacteroides fragilis.</title>
        <authorList>
            <person name="Otto B.R."/>
            <person name="van Dooren S.J.M."/>
            <person name="Dozois C.M."/>
            <person name="Luirink J."/>
            <person name="Oudega B."/>
        </authorList>
    </citation>
    <scope>FUNCTION</scope>
    <source>
        <strain>O8:K43 / EB1</strain>
    </source>
</reference>
<reference key="3">
    <citation type="journal article" date="2003" name="J. Biol. Chem.">
        <title>Signal recognition particle (SRP)-mediated targeting and Sec-dependent translocation of an extracellular Escherichia coli protein.</title>
        <authorList>
            <person name="Sijbrandi R."/>
            <person name="Urbanus M.L."/>
            <person name="ten Hagen-Jongman C.M."/>
            <person name="Bernstein H.D."/>
            <person name="Oudega B."/>
            <person name="Otto B.R."/>
            <person name="Luirink J."/>
        </authorList>
    </citation>
    <scope>SECRETION</scope>
    <source>
        <strain>O8:K43 / EB1</strain>
    </source>
</reference>
<reference key="4">
    <citation type="journal article" date="2005" name="J. Biol. Chem.">
        <title>Crystal structure of hemoglobin protease, a heme binding autotransporter protein from pathogenic Escherichia coli.</title>
        <authorList>
            <person name="Otto B.R."/>
            <person name="Sijbrandi R."/>
            <person name="Luirink J."/>
            <person name="Oudega B."/>
            <person name="Heddle J.G."/>
            <person name="Mizutani K."/>
            <person name="Park S.-Y."/>
            <person name="Tame J.R.H."/>
        </authorList>
    </citation>
    <scope>X-RAY CRYSTALLOGRAPHY (2.2 ANGSTROMS) OF 53-1100</scope>
    <source>
        <strain>O8:K43 / EB1</strain>
    </source>
</reference>
<accession>O88093</accession>
<feature type="signal peptide" evidence="5">
    <location>
        <begin position="1"/>
        <end position="52"/>
    </location>
</feature>
<feature type="chain" id="PRO_0000387597" description="Hemoglobin-binding protease hbp autotransporter">
    <location>
        <begin position="53"/>
        <end position="1377"/>
    </location>
</feature>
<feature type="chain" id="PRO_0000041982" description="Hemoglobin-binding protease hbp">
    <location>
        <begin position="53"/>
        <end position="1100"/>
    </location>
</feature>
<feature type="chain" id="PRO_0000041983" description="Hemoglobin-binding protease hbp translocator">
    <location>
        <begin position="1101"/>
        <end position="1377"/>
    </location>
</feature>
<feature type="domain" description="Peptidase S6" evidence="3">
    <location>
        <begin position="53"/>
        <end position="302"/>
    </location>
</feature>
<feature type="domain" description="Autotransporter" evidence="2">
    <location>
        <begin position="1111"/>
        <end position="1377"/>
    </location>
</feature>
<feature type="active site" description="Charge relay system">
    <location>
        <position position="125"/>
    </location>
</feature>
<feature type="active site" description="Charge relay system">
    <location>
        <position position="153"/>
    </location>
</feature>
<feature type="active site" description="Charge relay system">
    <location>
        <position position="259"/>
    </location>
</feature>
<feature type="site" description="Cleavage">
    <location>
        <begin position="1100"/>
        <end position="1101"/>
    </location>
</feature>
<feature type="strand" evidence="6">
    <location>
        <begin position="54"/>
        <end position="59"/>
    </location>
</feature>
<feature type="helix" evidence="6">
    <location>
        <begin position="62"/>
        <end position="68"/>
    </location>
</feature>
<feature type="helix" evidence="6">
    <location>
        <begin position="72"/>
        <end position="74"/>
    </location>
</feature>
<feature type="strand" evidence="6">
    <location>
        <begin position="80"/>
        <end position="84"/>
    </location>
</feature>
<feature type="strand" evidence="6">
    <location>
        <begin position="90"/>
        <end position="94"/>
    </location>
</feature>
<feature type="turn" evidence="6">
    <location>
        <begin position="107"/>
        <end position="109"/>
    </location>
</feature>
<feature type="strand" evidence="6">
    <location>
        <begin position="113"/>
        <end position="116"/>
    </location>
</feature>
<feature type="strand" evidence="6">
    <location>
        <begin position="119"/>
        <end position="122"/>
    </location>
</feature>
<feature type="strand" evidence="6">
    <location>
        <begin position="141"/>
        <end position="145"/>
    </location>
</feature>
<feature type="strand" evidence="6">
    <location>
        <begin position="150"/>
        <end position="153"/>
    </location>
</feature>
<feature type="strand" evidence="6">
    <location>
        <begin position="158"/>
        <end position="161"/>
    </location>
</feature>
<feature type="helix" evidence="6">
    <location>
        <begin position="180"/>
        <end position="182"/>
    </location>
</feature>
<feature type="turn" evidence="6">
    <location>
        <begin position="184"/>
        <end position="186"/>
    </location>
</feature>
<feature type="strand" evidence="6">
    <location>
        <begin position="190"/>
        <end position="194"/>
    </location>
</feature>
<feature type="strand" evidence="6">
    <location>
        <begin position="198"/>
        <end position="201"/>
    </location>
</feature>
<feature type="strand" evidence="6">
    <location>
        <begin position="207"/>
        <end position="211"/>
    </location>
</feature>
<feature type="strand" evidence="6">
    <location>
        <begin position="218"/>
        <end position="222"/>
    </location>
</feature>
<feature type="strand" evidence="6">
    <location>
        <begin position="226"/>
        <end position="228"/>
    </location>
</feature>
<feature type="turn" evidence="6">
    <location>
        <begin position="229"/>
        <end position="232"/>
    </location>
</feature>
<feature type="strand" evidence="6">
    <location>
        <begin position="233"/>
        <end position="236"/>
    </location>
</feature>
<feature type="helix" evidence="6">
    <location>
        <begin position="244"/>
        <end position="247"/>
    </location>
</feature>
<feature type="strand" evidence="6">
    <location>
        <begin position="249"/>
        <end position="251"/>
    </location>
</feature>
<feature type="strand" evidence="6">
    <location>
        <begin position="262"/>
        <end position="267"/>
    </location>
</feature>
<feature type="turn" evidence="6">
    <location>
        <begin position="268"/>
        <end position="271"/>
    </location>
</feature>
<feature type="strand" evidence="6">
    <location>
        <begin position="272"/>
        <end position="284"/>
    </location>
</feature>
<feature type="strand" evidence="6">
    <location>
        <begin position="290"/>
        <end position="294"/>
    </location>
</feature>
<feature type="helix" evidence="6">
    <location>
        <begin position="297"/>
        <end position="305"/>
    </location>
</feature>
<feature type="helix" evidence="6">
    <location>
        <begin position="316"/>
        <end position="318"/>
    </location>
</feature>
<feature type="strand" evidence="6">
    <location>
        <begin position="322"/>
        <end position="326"/>
    </location>
</feature>
<feature type="turn" evidence="6">
    <location>
        <begin position="328"/>
        <end position="330"/>
    </location>
</feature>
<feature type="strand" evidence="6">
    <location>
        <begin position="332"/>
        <end position="337"/>
    </location>
</feature>
<feature type="strand" evidence="6">
    <location>
        <begin position="340"/>
        <end position="345"/>
    </location>
</feature>
<feature type="helix" evidence="6">
    <location>
        <begin position="352"/>
        <end position="354"/>
    </location>
</feature>
<feature type="strand" evidence="6">
    <location>
        <begin position="357"/>
        <end position="362"/>
    </location>
</feature>
<feature type="strand" evidence="6">
    <location>
        <begin position="365"/>
        <end position="371"/>
    </location>
</feature>
<feature type="strand" evidence="6">
    <location>
        <begin position="379"/>
        <end position="384"/>
    </location>
</feature>
<feature type="strand" evidence="6">
    <location>
        <begin position="386"/>
        <end position="392"/>
    </location>
</feature>
<feature type="strand" evidence="6">
    <location>
        <begin position="396"/>
        <end position="403"/>
    </location>
</feature>
<feature type="strand" evidence="6">
    <location>
        <begin position="408"/>
        <end position="411"/>
    </location>
</feature>
<feature type="strand" evidence="6">
    <location>
        <begin position="420"/>
        <end position="431"/>
    </location>
</feature>
<feature type="strand" evidence="6">
    <location>
        <begin position="434"/>
        <end position="436"/>
    </location>
</feature>
<feature type="strand" evidence="6">
    <location>
        <begin position="439"/>
        <end position="443"/>
    </location>
</feature>
<feature type="strand" evidence="6">
    <location>
        <begin position="445"/>
        <end position="450"/>
    </location>
</feature>
<feature type="strand" evidence="6">
    <location>
        <begin position="466"/>
        <end position="468"/>
    </location>
</feature>
<feature type="strand" evidence="6">
    <location>
        <begin position="474"/>
        <end position="479"/>
    </location>
</feature>
<feature type="helix" evidence="6">
    <location>
        <begin position="485"/>
        <end position="487"/>
    </location>
</feature>
<feature type="strand" evidence="6">
    <location>
        <begin position="488"/>
        <end position="490"/>
    </location>
</feature>
<feature type="strand" evidence="6">
    <location>
        <begin position="495"/>
        <end position="498"/>
    </location>
</feature>
<feature type="strand" evidence="6">
    <location>
        <begin position="504"/>
        <end position="507"/>
    </location>
</feature>
<feature type="strand" evidence="6">
    <location>
        <begin position="516"/>
        <end position="520"/>
    </location>
</feature>
<feature type="strand" evidence="6">
    <location>
        <begin position="522"/>
        <end position="524"/>
    </location>
</feature>
<feature type="strand" evidence="6">
    <location>
        <begin position="526"/>
        <end position="530"/>
    </location>
</feature>
<feature type="helix" evidence="6">
    <location>
        <begin position="536"/>
        <end position="538"/>
    </location>
</feature>
<feature type="strand" evidence="6">
    <location>
        <begin position="555"/>
        <end position="560"/>
    </location>
</feature>
<feature type="turn" evidence="6">
    <location>
        <begin position="561"/>
        <end position="564"/>
    </location>
</feature>
<feature type="strand" evidence="6">
    <location>
        <begin position="565"/>
        <end position="571"/>
    </location>
</feature>
<feature type="strand" evidence="6">
    <location>
        <begin position="573"/>
        <end position="575"/>
    </location>
</feature>
<feature type="strand" evidence="6">
    <location>
        <begin position="581"/>
        <end position="583"/>
    </location>
</feature>
<feature type="strand" evidence="6">
    <location>
        <begin position="587"/>
        <end position="591"/>
    </location>
</feature>
<feature type="helix" evidence="6">
    <location>
        <begin position="596"/>
        <end position="607"/>
    </location>
</feature>
<feature type="strand" evidence="6">
    <location>
        <begin position="612"/>
        <end position="614"/>
    </location>
</feature>
<feature type="strand" evidence="6">
    <location>
        <begin position="616"/>
        <end position="627"/>
    </location>
</feature>
<feature type="strand" evidence="6">
    <location>
        <begin position="635"/>
        <end position="638"/>
    </location>
</feature>
<feature type="strand" evidence="6">
    <location>
        <begin position="640"/>
        <end position="657"/>
    </location>
</feature>
<feature type="helix" evidence="6">
    <location>
        <begin position="669"/>
        <end position="677"/>
    </location>
</feature>
<feature type="strand" evidence="6">
    <location>
        <begin position="685"/>
        <end position="687"/>
    </location>
</feature>
<feature type="strand" evidence="6">
    <location>
        <begin position="698"/>
        <end position="709"/>
    </location>
</feature>
<feature type="strand" evidence="6">
    <location>
        <begin position="711"/>
        <end position="714"/>
    </location>
</feature>
<feature type="strand" evidence="6">
    <location>
        <begin position="718"/>
        <end position="728"/>
    </location>
</feature>
<feature type="strand" evidence="6">
    <location>
        <begin position="730"/>
        <end position="734"/>
    </location>
</feature>
<feature type="strand" evidence="6">
    <location>
        <begin position="736"/>
        <end position="741"/>
    </location>
</feature>
<feature type="turn" evidence="6">
    <location>
        <begin position="742"/>
        <end position="745"/>
    </location>
</feature>
<feature type="strand" evidence="6">
    <location>
        <begin position="746"/>
        <end position="748"/>
    </location>
</feature>
<feature type="strand" evidence="6">
    <location>
        <begin position="752"/>
        <end position="756"/>
    </location>
</feature>
<feature type="helix" evidence="6">
    <location>
        <begin position="762"/>
        <end position="764"/>
    </location>
</feature>
<feature type="strand" evidence="6">
    <location>
        <begin position="767"/>
        <end position="777"/>
    </location>
</feature>
<feature type="strand" evidence="6">
    <location>
        <begin position="779"/>
        <end position="782"/>
    </location>
</feature>
<feature type="strand" evidence="6">
    <location>
        <begin position="784"/>
        <end position="794"/>
    </location>
</feature>
<feature type="strand" evidence="6">
    <location>
        <begin position="796"/>
        <end position="799"/>
    </location>
</feature>
<feature type="strand" evidence="6">
    <location>
        <begin position="802"/>
        <end position="806"/>
    </location>
</feature>
<feature type="strand" evidence="6">
    <location>
        <begin position="808"/>
        <end position="813"/>
    </location>
</feature>
<feature type="strand" evidence="6">
    <location>
        <begin position="815"/>
        <end position="818"/>
    </location>
</feature>
<feature type="strand" evidence="6">
    <location>
        <begin position="823"/>
        <end position="826"/>
    </location>
</feature>
<feature type="strand" evidence="6">
    <location>
        <begin position="830"/>
        <end position="847"/>
    </location>
</feature>
<feature type="strand" evidence="6">
    <location>
        <begin position="854"/>
        <end position="856"/>
    </location>
</feature>
<feature type="strand" evidence="6">
    <location>
        <begin position="859"/>
        <end position="870"/>
    </location>
</feature>
<feature type="strand" evidence="6">
    <location>
        <begin position="874"/>
        <end position="877"/>
    </location>
</feature>
<feature type="strand" evidence="6">
    <location>
        <begin position="879"/>
        <end position="892"/>
    </location>
</feature>
<feature type="strand" evidence="6">
    <location>
        <begin position="894"/>
        <end position="897"/>
    </location>
</feature>
<feature type="helix" evidence="6">
    <location>
        <begin position="909"/>
        <end position="917"/>
    </location>
</feature>
<feature type="turn" evidence="6">
    <location>
        <begin position="918"/>
        <end position="920"/>
    </location>
</feature>
<feature type="strand" evidence="6">
    <location>
        <begin position="922"/>
        <end position="927"/>
    </location>
</feature>
<feature type="strand" evidence="6">
    <location>
        <begin position="929"/>
        <end position="945"/>
    </location>
</feature>
<feature type="strand" evidence="6">
    <location>
        <begin position="949"/>
        <end position="958"/>
    </location>
</feature>
<feature type="strand" evidence="6">
    <location>
        <begin position="960"/>
        <end position="963"/>
    </location>
</feature>
<feature type="strand" evidence="8">
    <location>
        <begin position="967"/>
        <end position="969"/>
    </location>
</feature>
<feature type="strand" evidence="6">
    <location>
        <begin position="972"/>
        <end position="982"/>
    </location>
</feature>
<feature type="strand" evidence="6">
    <location>
        <begin position="984"/>
        <end position="988"/>
    </location>
</feature>
<feature type="strand" evidence="6">
    <location>
        <begin position="996"/>
        <end position="1006"/>
    </location>
</feature>
<feature type="strand" evidence="6">
    <location>
        <begin position="1008"/>
        <end position="1013"/>
    </location>
</feature>
<feature type="strand" evidence="6">
    <location>
        <begin position="1020"/>
        <end position="1022"/>
    </location>
</feature>
<feature type="strand" evidence="6">
    <location>
        <begin position="1026"/>
        <end position="1032"/>
    </location>
</feature>
<feature type="helix" evidence="6">
    <location>
        <begin position="1037"/>
        <end position="1039"/>
    </location>
</feature>
<feature type="strand" evidence="6">
    <location>
        <begin position="1040"/>
        <end position="1042"/>
    </location>
</feature>
<feature type="strand" evidence="6">
    <location>
        <begin position="1048"/>
        <end position="1051"/>
    </location>
</feature>
<feature type="strand" evidence="6">
    <location>
        <begin position="1053"/>
        <end position="1059"/>
    </location>
</feature>
<feature type="strand" evidence="6">
    <location>
        <begin position="1064"/>
        <end position="1073"/>
    </location>
</feature>
<feature type="helix" evidence="7">
    <location>
        <begin position="1075"/>
        <end position="1097"/>
    </location>
</feature>
<feature type="helix" evidence="7">
    <location>
        <begin position="1102"/>
        <end position="1106"/>
    </location>
</feature>
<feature type="strand" evidence="7">
    <location>
        <begin position="1115"/>
        <end position="1128"/>
    </location>
</feature>
<feature type="strand" evidence="7">
    <location>
        <begin position="1134"/>
        <end position="1150"/>
    </location>
</feature>
<feature type="strand" evidence="7">
    <location>
        <begin position="1153"/>
        <end position="1170"/>
    </location>
</feature>
<feature type="strand" evidence="7">
    <location>
        <begin position="1173"/>
        <end position="1190"/>
    </location>
</feature>
<feature type="strand" evidence="7">
    <location>
        <begin position="1193"/>
        <end position="1211"/>
    </location>
</feature>
<feature type="strand" evidence="7">
    <location>
        <begin position="1217"/>
        <end position="1234"/>
    </location>
</feature>
<feature type="strand" evidence="7">
    <location>
        <begin position="1236"/>
        <end position="1257"/>
    </location>
</feature>
<feature type="strand" evidence="7">
    <location>
        <begin position="1279"/>
        <end position="1292"/>
    </location>
</feature>
<feature type="strand" evidence="7">
    <location>
        <begin position="1294"/>
        <end position="1311"/>
    </location>
</feature>
<feature type="strand" evidence="7">
    <location>
        <begin position="1331"/>
        <end position="1345"/>
    </location>
</feature>
<feature type="turn" evidence="7">
    <location>
        <begin position="1346"/>
        <end position="1348"/>
    </location>
</feature>
<feature type="strand" evidence="7">
    <location>
        <begin position="1349"/>
        <end position="1360"/>
    </location>
</feature>
<feature type="strand" evidence="7">
    <location>
        <begin position="1362"/>
        <end position="1377"/>
    </location>
</feature>
<protein>
    <recommendedName>
        <fullName>Hemoglobin-binding protease hbp autotransporter</fullName>
        <ecNumber>3.4.21.-</ecNumber>
    </recommendedName>
    <component>
        <recommendedName>
            <fullName>Hemoglobin-binding protease hbp</fullName>
        </recommendedName>
    </component>
    <component>
        <recommendedName>
            <fullName>Hemoglobin-binding protease hbp translocator</fullName>
        </recommendedName>
        <alternativeName>
            <fullName>Helper peptide</fullName>
        </alternativeName>
    </component>
</protein>
<name>HBP_ECOLX</name>
<geneLocation type="plasmid">
    <name>IncFI ColV3-K30</name>
</geneLocation>
<organism>
    <name type="scientific">Escherichia coli</name>
    <dbReference type="NCBI Taxonomy" id="562"/>
    <lineage>
        <taxon>Bacteria</taxon>
        <taxon>Pseudomonadati</taxon>
        <taxon>Pseudomonadota</taxon>
        <taxon>Gammaproteobacteria</taxon>
        <taxon>Enterobacterales</taxon>
        <taxon>Enterobacteriaceae</taxon>
        <taxon>Escherichia</taxon>
    </lineage>
</organism>
<comment type="function">
    <text evidence="4 5">Interacts with hemoglobin, degrades it and subsequently binds the released heme. Could make heme accessible not only for E.coli, but also for B.fragilis during mixed intra-abdominal infections. Has a role in abscess formation.</text>
</comment>
<comment type="activity regulation">
    <text>Protease activity is inhibited by 3,4-dichloroisocoumarin.</text>
</comment>
<comment type="biophysicochemical properties">
    <phDependence>
        <text evidence="5">Optimum pH is 6.0.</text>
    </phDependence>
</comment>
<comment type="subcellular location">
    <molecule>Hemoglobin-binding protease hbp autotransporter</molecule>
    <subcellularLocation>
        <location evidence="1">Periplasm</location>
    </subcellularLocation>
</comment>
<comment type="subcellular location">
    <molecule>Hemoglobin-binding protease hbp</molecule>
    <subcellularLocation>
        <location>Secreted</location>
    </subcellularLocation>
    <subcellularLocation>
        <location>Cell surface</location>
    </subcellularLocation>
</comment>
<comment type="subcellular location">
    <molecule>Hemoglobin-binding protease hbp translocator</molecule>
    <subcellularLocation>
        <location evidence="1">Cell outer membrane</location>
        <topology evidence="1">Multi-pass membrane protein</topology>
    </subcellularLocation>
    <text evidence="1">The cleaved C-terminal fragment (autotransporter domain) is localized in the outer membrane.</text>
</comment>
<comment type="domain">
    <text>The signal peptide, cleaved at the inner membrane, guides the autotransporter protein to the periplasmic space. Then, insertion of the C-terminal translocator domain in the outer membrane forms a hydrophilic pore for the translocation of the passenger domain to the bacterial cell surface, with subsequent cleavage.</text>
</comment>
<comment type="PTM">
    <text>Cleaved to release the mature protein from the outer membrane.</text>
</comment>
<keyword id="KW-0002">3D-structure</keyword>
<keyword id="KW-0998">Cell outer membrane</keyword>
<keyword id="KW-0903">Direct protein sequencing</keyword>
<keyword id="KW-0378">Hydrolase</keyword>
<keyword id="KW-0472">Membrane</keyword>
<keyword id="KW-0574">Periplasm</keyword>
<keyword id="KW-0614">Plasmid</keyword>
<keyword id="KW-0645">Protease</keyword>
<keyword id="KW-0964">Secreted</keyword>
<keyword id="KW-0720">Serine protease</keyword>
<keyword id="KW-0732">Signal</keyword>
<keyword id="KW-0812">Transmembrane</keyword>
<keyword id="KW-1134">Transmembrane beta strand</keyword>
<keyword id="KW-0843">Virulence</keyword>
<keyword id="KW-0865">Zymogen</keyword>
<gene>
    <name type="primary">hbp</name>
</gene>